<name>TCP4_CHICK</name>
<comment type="function">
    <text evidence="1">General coactivator that functions cooperatively with TAFs and mediates functional interactions between upstream activators and the general transcriptional machinery. May be involved in stabilizing the multiprotein transcription complex. Binds single-stranded DNA. Also binds, in vitro, non-specifically to double-stranded DNA (ds DNA) (By similarity).</text>
</comment>
<comment type="subcellular location">
    <subcellularLocation>
        <location evidence="1">Nucleus</location>
    </subcellularLocation>
</comment>
<comment type="similarity">
    <text evidence="3">Belongs to the transcriptional coactivator PC4 family.</text>
</comment>
<accession>Q5ZK63</accession>
<protein>
    <recommendedName>
        <fullName>Activated RNA polymerase II transcriptional coactivator p15</fullName>
    </recommendedName>
    <alternativeName>
        <fullName>SUB1 homolog</fullName>
    </alternativeName>
</protein>
<evidence type="ECO:0000250" key="1"/>
<evidence type="ECO:0000256" key="2">
    <source>
        <dbReference type="SAM" id="MobiDB-lite"/>
    </source>
</evidence>
<evidence type="ECO:0000305" key="3"/>
<gene>
    <name type="primary">SUB1</name>
    <name type="synonym">RPO2TC1</name>
    <name type="ORF">RCJMB04_12p22</name>
</gene>
<organism>
    <name type="scientific">Gallus gallus</name>
    <name type="common">Chicken</name>
    <dbReference type="NCBI Taxonomy" id="9031"/>
    <lineage>
        <taxon>Eukaryota</taxon>
        <taxon>Metazoa</taxon>
        <taxon>Chordata</taxon>
        <taxon>Craniata</taxon>
        <taxon>Vertebrata</taxon>
        <taxon>Euteleostomi</taxon>
        <taxon>Archelosauria</taxon>
        <taxon>Archosauria</taxon>
        <taxon>Dinosauria</taxon>
        <taxon>Saurischia</taxon>
        <taxon>Theropoda</taxon>
        <taxon>Coelurosauria</taxon>
        <taxon>Aves</taxon>
        <taxon>Neognathae</taxon>
        <taxon>Galloanserae</taxon>
        <taxon>Galliformes</taxon>
        <taxon>Phasianidae</taxon>
        <taxon>Phasianinae</taxon>
        <taxon>Gallus</taxon>
    </lineage>
</organism>
<proteinExistence type="evidence at transcript level"/>
<dbReference type="EMBL" id="AJ720221">
    <property type="protein sequence ID" value="CAG31880.1"/>
    <property type="molecule type" value="mRNA"/>
</dbReference>
<dbReference type="RefSeq" id="NP_001008479.1">
    <property type="nucleotide sequence ID" value="NM_001008479.2"/>
</dbReference>
<dbReference type="SMR" id="Q5ZK63"/>
<dbReference type="FunCoup" id="Q5ZK63">
    <property type="interactions" value="2128"/>
</dbReference>
<dbReference type="STRING" id="9031.ENSGALP00000005126"/>
<dbReference type="PaxDb" id="9031-ENSGALP00000005126"/>
<dbReference type="Ensembl" id="ENSGALT00010029855.1">
    <property type="protein sequence ID" value="ENSGALP00010017384.1"/>
    <property type="gene ID" value="ENSGALG00010012449.1"/>
</dbReference>
<dbReference type="GeneID" id="427425"/>
<dbReference type="KEGG" id="gga:427425"/>
<dbReference type="CTD" id="10923"/>
<dbReference type="VEuPathDB" id="HostDB:geneid_427425"/>
<dbReference type="eggNOG" id="KOG2712">
    <property type="taxonomic scope" value="Eukaryota"/>
</dbReference>
<dbReference type="GeneTree" id="ENSGT00390000008802"/>
<dbReference type="HOGENOM" id="CLU_104273_1_1_1"/>
<dbReference type="InParanoid" id="Q5ZK63"/>
<dbReference type="OMA" id="VTINEFR"/>
<dbReference type="OrthoDB" id="2505440at2759"/>
<dbReference type="PhylomeDB" id="Q5ZK63"/>
<dbReference type="PRO" id="PR:Q5ZK63"/>
<dbReference type="Proteomes" id="UP000000539">
    <property type="component" value="Chromosome Z"/>
</dbReference>
<dbReference type="Bgee" id="ENSGALG00000003248">
    <property type="expression patterns" value="Expressed in brain and 14 other cell types or tissues"/>
</dbReference>
<dbReference type="GO" id="GO:0005634">
    <property type="term" value="C:nucleus"/>
    <property type="evidence" value="ECO:0000318"/>
    <property type="project" value="GO_Central"/>
</dbReference>
<dbReference type="GO" id="GO:0005667">
    <property type="term" value="C:transcription regulator complex"/>
    <property type="evidence" value="ECO:0000318"/>
    <property type="project" value="GO_Central"/>
</dbReference>
<dbReference type="GO" id="GO:0003677">
    <property type="term" value="F:DNA binding"/>
    <property type="evidence" value="ECO:0007669"/>
    <property type="project" value="UniProtKB-KW"/>
</dbReference>
<dbReference type="GO" id="GO:0003713">
    <property type="term" value="F:transcription coactivator activity"/>
    <property type="evidence" value="ECO:0000318"/>
    <property type="project" value="GO_Central"/>
</dbReference>
<dbReference type="GO" id="GO:0060261">
    <property type="term" value="P:positive regulation of transcription initiation by RNA polymerase II"/>
    <property type="evidence" value="ECO:0007669"/>
    <property type="project" value="InterPro"/>
</dbReference>
<dbReference type="FunFam" id="2.30.31.10:FF:000001">
    <property type="entry name" value="Activated RNA polymerase II transcriptional coactivator p15"/>
    <property type="match status" value="1"/>
</dbReference>
<dbReference type="Gene3D" id="2.30.31.10">
    <property type="entry name" value="Transcriptional Coactivator Pc4, Chain A"/>
    <property type="match status" value="1"/>
</dbReference>
<dbReference type="InterPro" id="IPR003173">
    <property type="entry name" value="PC4_C"/>
</dbReference>
<dbReference type="InterPro" id="IPR009044">
    <property type="entry name" value="ssDNA-bd_transcriptional_reg"/>
</dbReference>
<dbReference type="InterPro" id="IPR045125">
    <property type="entry name" value="Sub1/Tcp4-like"/>
</dbReference>
<dbReference type="PANTHER" id="PTHR13215">
    <property type="entry name" value="RNA POLYMERASE II TRANSCRIPTIONAL COACTIVATOR"/>
    <property type="match status" value="1"/>
</dbReference>
<dbReference type="Pfam" id="PF02229">
    <property type="entry name" value="PC4"/>
    <property type="match status" value="1"/>
</dbReference>
<dbReference type="SUPFAM" id="SSF54447">
    <property type="entry name" value="ssDNA-binding transcriptional regulator domain"/>
    <property type="match status" value="1"/>
</dbReference>
<keyword id="KW-0010">Activator</keyword>
<keyword id="KW-0238">DNA-binding</keyword>
<keyword id="KW-0539">Nucleus</keyword>
<keyword id="KW-1185">Reference proteome</keyword>
<keyword id="KW-0804">Transcription</keyword>
<keyword id="KW-0805">Transcription regulation</keyword>
<reference key="1">
    <citation type="journal article" date="2005" name="Genome Biol.">
        <title>Full-length cDNAs from chicken bursal lymphocytes to facilitate gene function analysis.</title>
        <authorList>
            <person name="Caldwell R.B."/>
            <person name="Kierzek A.M."/>
            <person name="Arakawa H."/>
            <person name="Bezzubov Y."/>
            <person name="Zaim J."/>
            <person name="Fiedler P."/>
            <person name="Kutter S."/>
            <person name="Blagodatski A."/>
            <person name="Kostovska D."/>
            <person name="Koter M."/>
            <person name="Plachy J."/>
            <person name="Carninci P."/>
            <person name="Hayashizaki Y."/>
            <person name="Buerstedde J.-M."/>
        </authorList>
    </citation>
    <scope>NUCLEOTIDE SEQUENCE [LARGE SCALE MRNA]</scope>
    <source>
        <strain>CB</strain>
        <tissue>Bursa of Fabricius</tissue>
    </source>
</reference>
<feature type="initiator methionine" description="Removed" evidence="1">
    <location>
        <position position="1"/>
    </location>
</feature>
<feature type="chain" id="PRO_0000291885" description="Activated RNA polymerase II transcriptional coactivator p15">
    <location>
        <begin position="2"/>
        <end position="126"/>
    </location>
</feature>
<feature type="region of interest" description="Disordered" evidence="2">
    <location>
        <begin position="1"/>
        <end position="63"/>
    </location>
</feature>
<feature type="region of interest" description="Regulatory" evidence="1">
    <location>
        <begin position="2"/>
        <end position="50"/>
    </location>
</feature>
<feature type="region of interest" description="Interaction with ssDNA" evidence="1">
    <location>
        <begin position="76"/>
        <end position="100"/>
    </location>
</feature>
<feature type="compositionally biased region" description="Low complexity" evidence="2">
    <location>
        <begin position="7"/>
        <end position="16"/>
    </location>
</feature>
<feature type="compositionally biased region" description="Basic and acidic residues" evidence="2">
    <location>
        <begin position="31"/>
        <end position="44"/>
    </location>
</feature>
<feature type="compositionally biased region" description="Low complexity" evidence="2">
    <location>
        <begin position="45"/>
        <end position="55"/>
    </location>
</feature>
<sequence length="126" mass="14237">MPKSKELVSSSSSASDSDSEVDKKAKRKKQAAPEKPVKKQKTGESSKGAASSKQSSNRDENMFQIGKMRYVSVRDFKGKVLIDIREYWMDQEGEMKPGRKGISLNPEQWNQLKEQISDIDDAVRKL</sequence>